<keyword id="KW-0002">3D-structure</keyword>
<keyword id="KW-0167">Capsid protein</keyword>
<keyword id="KW-1048">Host nucleus</keyword>
<keyword id="KW-1185">Reference proteome</keyword>
<keyword id="KW-0946">Virion</keyword>
<evidence type="ECO:0000255" key="1">
    <source>
        <dbReference type="HAMAP-Rule" id="MF_04022"/>
    </source>
</evidence>
<evidence type="ECO:0000256" key="2">
    <source>
        <dbReference type="SAM" id="MobiDB-lite"/>
    </source>
</evidence>
<evidence type="ECO:0000305" key="3"/>
<name>SCP_EBVB9</name>
<gene>
    <name evidence="1" type="primary">SCP</name>
    <name type="ORF">BFRF3</name>
</gene>
<feature type="chain" id="PRO_0000115739" description="Small capsomere-interacting protein">
    <location>
        <begin position="1"/>
        <end position="176"/>
    </location>
</feature>
<feature type="region of interest" description="Disordered" evidence="2">
    <location>
        <begin position="75"/>
        <end position="109"/>
    </location>
</feature>
<feature type="region of interest" description="Disordered" evidence="2">
    <location>
        <begin position="148"/>
        <end position="176"/>
    </location>
</feature>
<feature type="compositionally biased region" description="Low complexity" evidence="2">
    <location>
        <begin position="80"/>
        <end position="109"/>
    </location>
</feature>
<dbReference type="EMBL" id="V01555">
    <property type="protein sequence ID" value="CAA24838.1"/>
    <property type="status" value="ALT_INIT"/>
    <property type="molecule type" value="Genomic_DNA"/>
</dbReference>
<dbReference type="EMBL" id="M11923">
    <property type="protein sequence ID" value="AAA45870.1"/>
    <property type="molecule type" value="Genomic_DNA"/>
</dbReference>
<dbReference type="EMBL" id="AJ507799">
    <property type="protein sequence ID" value="CAD53401.1"/>
    <property type="molecule type" value="Genomic_DNA"/>
</dbReference>
<dbReference type="RefSeq" id="YP_401651.1">
    <property type="nucleotide sequence ID" value="NC_007605.1"/>
</dbReference>
<dbReference type="PDB" id="6W19">
    <property type="method" value="EM"/>
    <property type="resolution" value="5.50 A"/>
    <property type="chains" value="Q/R/S/T/U/V/W/X/Y/Z/a/b/c/d/e/u=1-176"/>
</dbReference>
<dbReference type="PDB" id="6W2D">
    <property type="method" value="EM"/>
    <property type="resolution" value="4.00 A"/>
    <property type="chains" value="Z/a/d/e/u=1-176"/>
</dbReference>
<dbReference type="PDB" id="6W2E">
    <property type="method" value="EM"/>
    <property type="resolution" value="4.40 A"/>
    <property type="chains" value="Z/a/d/e=1-176"/>
</dbReference>
<dbReference type="PDB" id="7BQX">
    <property type="method" value="EM"/>
    <property type="resolution" value="4.20 A"/>
    <property type="chains" value="2/Y/Z/y=1-176"/>
</dbReference>
<dbReference type="PDB" id="7BR7">
    <property type="method" value="EM"/>
    <property type="resolution" value="4.30 A"/>
    <property type="chains" value="2/Y/Z/m/y=1-176"/>
</dbReference>
<dbReference type="PDB" id="7BR8">
    <property type="method" value="EM"/>
    <property type="resolution" value="3.80 A"/>
    <property type="chains" value="2/Y/Z/m/y=1-176"/>
</dbReference>
<dbReference type="PDB" id="7BSI">
    <property type="method" value="EM"/>
    <property type="resolution" value="4.10 A"/>
    <property type="chains" value="0/1/G/H/I/J/K/L/P/Q/R/X/Y/Z/m/y=1-176"/>
</dbReference>
<dbReference type="PDBsum" id="6W19"/>
<dbReference type="PDBsum" id="6W2D"/>
<dbReference type="PDBsum" id="6W2E"/>
<dbReference type="PDBsum" id="7BQX"/>
<dbReference type="PDBsum" id="7BR7"/>
<dbReference type="PDBsum" id="7BR8"/>
<dbReference type="PDBsum" id="7BSI"/>
<dbReference type="EMDB" id="EMD-21504"/>
<dbReference type="EMDB" id="EMD-21525"/>
<dbReference type="EMDB" id="EMD-21526"/>
<dbReference type="EMDB" id="EMD-30157"/>
<dbReference type="EMDB" id="EMD-30158"/>
<dbReference type="EMDB" id="EMD-30159"/>
<dbReference type="EMDB" id="EMD-30162"/>
<dbReference type="SMR" id="P14348"/>
<dbReference type="IntAct" id="P14348">
    <property type="interactions" value="8"/>
</dbReference>
<dbReference type="MINT" id="P14348"/>
<dbReference type="DNASU" id="3783701"/>
<dbReference type="GeneID" id="3783701"/>
<dbReference type="KEGG" id="vg:3783701"/>
<dbReference type="Proteomes" id="UP000153037">
    <property type="component" value="Segment"/>
</dbReference>
<dbReference type="GO" id="GO:0042025">
    <property type="term" value="C:host cell nucleus"/>
    <property type="evidence" value="ECO:0007669"/>
    <property type="project" value="UniProtKB-SubCell"/>
</dbReference>
<dbReference type="GO" id="GO:0019028">
    <property type="term" value="C:viral capsid"/>
    <property type="evidence" value="ECO:0007669"/>
    <property type="project" value="UniProtKB-UniRule"/>
</dbReference>
<dbReference type="GO" id="GO:0016032">
    <property type="term" value="P:viral process"/>
    <property type="evidence" value="ECO:0007669"/>
    <property type="project" value="UniProtKB-UniRule"/>
</dbReference>
<dbReference type="HAMAP" id="MF_04022">
    <property type="entry name" value="HSV_SCP_gammahv"/>
    <property type="match status" value="1"/>
</dbReference>
<dbReference type="InterPro" id="IPR009299">
    <property type="entry name" value="Herpes_capsid"/>
</dbReference>
<dbReference type="Pfam" id="PF06112">
    <property type="entry name" value="Herpes_capsid"/>
    <property type="match status" value="1"/>
</dbReference>
<protein>
    <recommendedName>
        <fullName evidence="1">Small capsomere-interacting protein</fullName>
    </recommendedName>
</protein>
<organism>
    <name type="scientific">Epstein-Barr virus (strain B95-8)</name>
    <name type="common">HHV-4</name>
    <name type="synonym">Human herpesvirus 4</name>
    <dbReference type="NCBI Taxonomy" id="10377"/>
    <lineage>
        <taxon>Viruses</taxon>
        <taxon>Duplodnaviria</taxon>
        <taxon>Heunggongvirae</taxon>
        <taxon>Peploviricota</taxon>
        <taxon>Herviviricetes</taxon>
        <taxon>Herpesvirales</taxon>
        <taxon>Orthoherpesviridae</taxon>
        <taxon>Gammaherpesvirinae</taxon>
        <taxon>Lymphocryptovirus</taxon>
        <taxon>Lymphocryptovirus humangamma4</taxon>
        <taxon>Epstein-Barr virus (strain GD1)</taxon>
    </lineage>
</organism>
<reference key="1">
    <citation type="journal article" date="1984" name="Nature">
        <title>DNA sequence and expression of the B95-8 Epstein-Barr virus genome.</title>
        <authorList>
            <person name="Baer R."/>
            <person name="Bankier A.T."/>
            <person name="Biggin M.D."/>
            <person name="Deininger P.L."/>
            <person name="Farrell P.J."/>
            <person name="Gibson T.J."/>
            <person name="Hatfull G."/>
            <person name="Hudson G.S."/>
            <person name="Satchwell S.C."/>
            <person name="Seguin C."/>
            <person name="Tuffnell P.S."/>
            <person name="Barrell B.G."/>
        </authorList>
    </citation>
    <scope>NUCLEOTIDE SEQUENCE [LARGE SCALE GENOMIC DNA]</scope>
</reference>
<reference key="2">
    <citation type="journal article" date="1985" name="Virology">
        <title>The BamHI F region of the B95-8 Epstein-Barr virus genome.</title>
        <authorList>
            <person name="Hudson G.S."/>
            <person name="Gibson T.J."/>
            <person name="Barrell B.G."/>
        </authorList>
    </citation>
    <scope>NUCLEOTIDE SEQUENCE [GENOMIC DNA]</scope>
</reference>
<reference key="3">
    <citation type="journal article" date="2003" name="Virology">
        <title>Updated Epstein-Barr virus (EBV) DNA sequence and analysis of a promoter for the BART (CST, BARF0) RNAs of EBV.</title>
        <authorList>
            <person name="de Jesus O."/>
            <person name="Smith P.R."/>
            <person name="Spender L.C."/>
            <person name="Elgueta Karstegl C."/>
            <person name="Niller H.H."/>
            <person name="Huang D."/>
            <person name="Farrell P.J."/>
        </authorList>
    </citation>
    <scope>GENOME REANNOTATION</scope>
</reference>
<sequence>MARRLPKPTLQGRLEADFPDSPLLPKFQELNQNNLPNDVFREAQRSYLVFLTSQFCYEEYVQRTFGVPRRQRAIDKRQRASVAGAGAHAHLGGSSATPVQQAQAAASAGTGALASSAPSTAVAQSATPSVSSSISSLRAATSGATAAASAAAAVDTGSGGGGQPHDTAPRGARKKQ</sequence>
<proteinExistence type="evidence at protein level"/>
<organismHost>
    <name type="scientific">Homo sapiens</name>
    <name type="common">Human</name>
    <dbReference type="NCBI Taxonomy" id="9606"/>
</organismHost>
<accession>P14348</accession>
<accession>Q777G5</accession>
<comment type="function">
    <text evidence="1">Participates in the assembly of the infectious particles by decorating the outer surface of the capsid shell and thus forming a layer between the capsid and the tegument. Complexes composed of the major capsid protein and small capsomere-interacting protein/SCP assemble together in the host cytoplasm and are translocated to the nucleus, where they accumulate and participate in capsid assembly.</text>
</comment>
<comment type="subunit">
    <text evidence="1">Interacts with the major capsid protein/MCP.</text>
</comment>
<comment type="interaction">
    <interactant intactId="EBI-2620158">
        <id>P14348</id>
    </interactant>
    <interactant intactId="EBI-9645180">
        <id>P0C703</id>
        <label>MCP</label>
    </interactant>
    <organismsDiffer>true</organismsDiffer>
    <experiments>2</experiments>
</comment>
<comment type="subcellular location">
    <subcellularLocation>
        <location evidence="1">Virion</location>
    </subcellularLocation>
    <subcellularLocation>
        <location evidence="1">Host nucleus</location>
    </subcellularLocation>
</comment>
<comment type="similarity">
    <text evidence="1">Belongs to the herpesviridae small capsomere-interacting protein family.</text>
</comment>
<comment type="sequence caution" evidence="3">
    <conflict type="erroneous initiation">
        <sequence resource="EMBL-CDS" id="CAA24838"/>
    </conflict>
</comment>